<keyword id="KW-0007">Acetylation</keyword>
<keyword id="KW-0025">Alternative splicing</keyword>
<keyword id="KW-0067">ATP-binding</keyword>
<keyword id="KW-0418">Kinase</keyword>
<keyword id="KW-0443">Lipid metabolism</keyword>
<keyword id="KW-0472">Membrane</keyword>
<keyword id="KW-0496">Mitochondrion</keyword>
<keyword id="KW-0999">Mitochondrion inner membrane</keyword>
<keyword id="KW-0547">Nucleotide-binding</keyword>
<keyword id="KW-1185">Reference proteome</keyword>
<keyword id="KW-0808">Transferase</keyword>
<sequence length="421" mass="46976">MTAFFKTLRNHWKKTTAGLCLLTWGGHWLYGKHCDNLLRRAACQEAQVFGNQLIPPNAQVKKATVFLNPAACKGKARTLFEKNAAPILHLSGMDVTVVKTDYEGQAKKLLELMESTDVIIVAGGDGTLQEVVTGVLRRTDEATFSKIPIGFIPLGQTSSLSHTLFAESGNKVQHITDATLAIVKGETVPLDVLQIKGEKEQPVYAMTGLRWGSFRDAGVKVSKYWYLGPLKTKAAHFFSTLQEWPQTHQASISYTGPRERPPIEPEETPPRPSLYRRILRRLASFWAQPQDASSREVSPEVWKDVQLSTIELSITTRNTQLDLMSKEDFMNICIEPDTVSKGDFIIIGSKKVRDPGLRAAGTECLQASHCTLVLPEGTEGSFSIDSEEYEAMPVEVKLLPRKLRFFCDPRKREQMLPSTSQ</sequence>
<feature type="chain" id="PRO_0000252381" description="Acylglycerol kinase, mitochondrial">
    <location>
        <begin position="1"/>
        <end position="421"/>
    </location>
</feature>
<feature type="domain" description="DAGKc" evidence="2">
    <location>
        <begin position="58"/>
        <end position="199"/>
    </location>
</feature>
<feature type="region of interest" description="Hydrophobic" evidence="1">
    <location>
        <begin position="15"/>
        <end position="31"/>
    </location>
</feature>
<feature type="region of interest" description="Disordered" evidence="3">
    <location>
        <begin position="252"/>
        <end position="271"/>
    </location>
</feature>
<feature type="modified residue" description="N6-acetyllysine" evidence="1">
    <location>
        <position position="6"/>
    </location>
</feature>
<feature type="splice variant" id="VSP_020927" description="In isoform 2." evidence="7">
    <location>
        <begin position="174"/>
        <end position="421"/>
    </location>
</feature>
<reference key="1">
    <citation type="journal article" date="2004" name="J. Biol. Chem.">
        <title>MuLK, a eukaryotic multi-substrate lipid kinase.</title>
        <authorList>
            <person name="Waggoner D.W."/>
            <person name="Johnson L.B."/>
            <person name="Mann P.C."/>
            <person name="Morris V."/>
            <person name="Guastella J."/>
            <person name="Bajjalieh S.M."/>
        </authorList>
    </citation>
    <scope>NUCLEOTIDE SEQUENCE [MRNA] (ISOFORM 1)</scope>
    <scope>FUNCTION</scope>
    <scope>CATALYTIC ACTIVITY</scope>
    <scope>BIOPHYSICOCHEMICAL PROPERTIES</scope>
    <scope>TISSUE SPECIFICITY</scope>
    <scope>COFACTOR</scope>
    <scope>ACTIVITY REGULATION</scope>
    <source>
        <strain>FVB/N</strain>
        <tissue>Carcinoma</tissue>
    </source>
</reference>
<reference key="2">
    <citation type="journal article" date="2006" name="J. Lipid Res.">
        <title>Further characterization of mammalian ceramide kinase: substrate delivery and (stereo)specificity, tissue distribution, and subcellular localization studies.</title>
        <authorList>
            <person name="Van Overloop H."/>
            <person name="Gijsbers S."/>
            <person name="Van Veldhoven P.P."/>
        </authorList>
    </citation>
    <scope>NUCLEOTIDE SEQUENCE [MRNA] (ISOFORM 1)</scope>
</reference>
<reference key="3">
    <citation type="journal article" date="2005" name="Science">
        <title>The transcriptional landscape of the mammalian genome.</title>
        <authorList>
            <person name="Carninci P."/>
            <person name="Kasukawa T."/>
            <person name="Katayama S."/>
            <person name="Gough J."/>
            <person name="Frith M.C."/>
            <person name="Maeda N."/>
            <person name="Oyama R."/>
            <person name="Ravasi T."/>
            <person name="Lenhard B."/>
            <person name="Wells C."/>
            <person name="Kodzius R."/>
            <person name="Shimokawa K."/>
            <person name="Bajic V.B."/>
            <person name="Brenner S.E."/>
            <person name="Batalov S."/>
            <person name="Forrest A.R."/>
            <person name="Zavolan M."/>
            <person name="Davis M.J."/>
            <person name="Wilming L.G."/>
            <person name="Aidinis V."/>
            <person name="Allen J.E."/>
            <person name="Ambesi-Impiombato A."/>
            <person name="Apweiler R."/>
            <person name="Aturaliya R.N."/>
            <person name="Bailey T.L."/>
            <person name="Bansal M."/>
            <person name="Baxter L."/>
            <person name="Beisel K.W."/>
            <person name="Bersano T."/>
            <person name="Bono H."/>
            <person name="Chalk A.M."/>
            <person name="Chiu K.P."/>
            <person name="Choudhary V."/>
            <person name="Christoffels A."/>
            <person name="Clutterbuck D.R."/>
            <person name="Crowe M.L."/>
            <person name="Dalla E."/>
            <person name="Dalrymple B.P."/>
            <person name="de Bono B."/>
            <person name="Della Gatta G."/>
            <person name="di Bernardo D."/>
            <person name="Down T."/>
            <person name="Engstrom P."/>
            <person name="Fagiolini M."/>
            <person name="Faulkner G."/>
            <person name="Fletcher C.F."/>
            <person name="Fukushima T."/>
            <person name="Furuno M."/>
            <person name="Futaki S."/>
            <person name="Gariboldi M."/>
            <person name="Georgii-Hemming P."/>
            <person name="Gingeras T.R."/>
            <person name="Gojobori T."/>
            <person name="Green R.E."/>
            <person name="Gustincich S."/>
            <person name="Harbers M."/>
            <person name="Hayashi Y."/>
            <person name="Hensch T.K."/>
            <person name="Hirokawa N."/>
            <person name="Hill D."/>
            <person name="Huminiecki L."/>
            <person name="Iacono M."/>
            <person name="Ikeo K."/>
            <person name="Iwama A."/>
            <person name="Ishikawa T."/>
            <person name="Jakt M."/>
            <person name="Kanapin A."/>
            <person name="Katoh M."/>
            <person name="Kawasawa Y."/>
            <person name="Kelso J."/>
            <person name="Kitamura H."/>
            <person name="Kitano H."/>
            <person name="Kollias G."/>
            <person name="Krishnan S.P."/>
            <person name="Kruger A."/>
            <person name="Kummerfeld S.K."/>
            <person name="Kurochkin I.V."/>
            <person name="Lareau L.F."/>
            <person name="Lazarevic D."/>
            <person name="Lipovich L."/>
            <person name="Liu J."/>
            <person name="Liuni S."/>
            <person name="McWilliam S."/>
            <person name="Madan Babu M."/>
            <person name="Madera M."/>
            <person name="Marchionni L."/>
            <person name="Matsuda H."/>
            <person name="Matsuzawa S."/>
            <person name="Miki H."/>
            <person name="Mignone F."/>
            <person name="Miyake S."/>
            <person name="Morris K."/>
            <person name="Mottagui-Tabar S."/>
            <person name="Mulder N."/>
            <person name="Nakano N."/>
            <person name="Nakauchi H."/>
            <person name="Ng P."/>
            <person name="Nilsson R."/>
            <person name="Nishiguchi S."/>
            <person name="Nishikawa S."/>
            <person name="Nori F."/>
            <person name="Ohara O."/>
            <person name="Okazaki Y."/>
            <person name="Orlando V."/>
            <person name="Pang K.C."/>
            <person name="Pavan W.J."/>
            <person name="Pavesi G."/>
            <person name="Pesole G."/>
            <person name="Petrovsky N."/>
            <person name="Piazza S."/>
            <person name="Reed J."/>
            <person name="Reid J.F."/>
            <person name="Ring B.Z."/>
            <person name="Ringwald M."/>
            <person name="Rost B."/>
            <person name="Ruan Y."/>
            <person name="Salzberg S.L."/>
            <person name="Sandelin A."/>
            <person name="Schneider C."/>
            <person name="Schoenbach C."/>
            <person name="Sekiguchi K."/>
            <person name="Semple C.A."/>
            <person name="Seno S."/>
            <person name="Sessa L."/>
            <person name="Sheng Y."/>
            <person name="Shibata Y."/>
            <person name="Shimada H."/>
            <person name="Shimada K."/>
            <person name="Silva D."/>
            <person name="Sinclair B."/>
            <person name="Sperling S."/>
            <person name="Stupka E."/>
            <person name="Sugiura K."/>
            <person name="Sultana R."/>
            <person name="Takenaka Y."/>
            <person name="Taki K."/>
            <person name="Tammoja K."/>
            <person name="Tan S.L."/>
            <person name="Tang S."/>
            <person name="Taylor M.S."/>
            <person name="Tegner J."/>
            <person name="Teichmann S.A."/>
            <person name="Ueda H.R."/>
            <person name="van Nimwegen E."/>
            <person name="Verardo R."/>
            <person name="Wei C.L."/>
            <person name="Yagi K."/>
            <person name="Yamanishi H."/>
            <person name="Zabarovsky E."/>
            <person name="Zhu S."/>
            <person name="Zimmer A."/>
            <person name="Hide W."/>
            <person name="Bult C."/>
            <person name="Grimmond S.M."/>
            <person name="Teasdale R.D."/>
            <person name="Liu E.T."/>
            <person name="Brusic V."/>
            <person name="Quackenbush J."/>
            <person name="Wahlestedt C."/>
            <person name="Mattick J.S."/>
            <person name="Hume D.A."/>
            <person name="Kai C."/>
            <person name="Sasaki D."/>
            <person name="Tomaru Y."/>
            <person name="Fukuda S."/>
            <person name="Kanamori-Katayama M."/>
            <person name="Suzuki M."/>
            <person name="Aoki J."/>
            <person name="Arakawa T."/>
            <person name="Iida J."/>
            <person name="Imamura K."/>
            <person name="Itoh M."/>
            <person name="Kato T."/>
            <person name="Kawaji H."/>
            <person name="Kawagashira N."/>
            <person name="Kawashima T."/>
            <person name="Kojima M."/>
            <person name="Kondo S."/>
            <person name="Konno H."/>
            <person name="Nakano K."/>
            <person name="Ninomiya N."/>
            <person name="Nishio T."/>
            <person name="Okada M."/>
            <person name="Plessy C."/>
            <person name="Shibata K."/>
            <person name="Shiraki T."/>
            <person name="Suzuki S."/>
            <person name="Tagami M."/>
            <person name="Waki K."/>
            <person name="Watahiki A."/>
            <person name="Okamura-Oho Y."/>
            <person name="Suzuki H."/>
            <person name="Kawai J."/>
            <person name="Hayashizaki Y."/>
        </authorList>
    </citation>
    <scope>NUCLEOTIDE SEQUENCE [LARGE SCALE MRNA] (ISOFORMS 1 AND 2)</scope>
    <source>
        <strain>C57BL/6J</strain>
        <tissue>Head</tissue>
    </source>
</reference>
<reference key="4">
    <citation type="journal article" date="2004" name="Genome Res.">
        <title>The status, quality, and expansion of the NIH full-length cDNA project: the Mammalian Gene Collection (MGC).</title>
        <authorList>
            <consortium name="The MGC Project Team"/>
        </authorList>
    </citation>
    <scope>NUCLEOTIDE SEQUENCE [LARGE SCALE MRNA] (ISOFORM 1)</scope>
    <source>
        <strain>FVB/N</strain>
        <tissue>Liver</tissue>
        <tissue>Mammary tumor</tissue>
    </source>
</reference>
<reference key="5">
    <citation type="journal article" date="2007" name="Biochemistry">
        <title>Substrate chirality and specificity of diacylglycerol kinases and the multisubstrate lipid kinase.</title>
        <authorList>
            <person name="Epand R.M."/>
            <person name="Shulga Y.V."/>
            <person name="Timmons H.C."/>
            <person name="Perri A.L."/>
            <person name="Belani J.D."/>
            <person name="Perinpanathan K."/>
            <person name="Johnson-McIntire L.B."/>
            <person name="Bajjalieh S."/>
            <person name="Dicu A.O."/>
            <person name="Elias C."/>
            <person name="Rychnovsky S.D."/>
            <person name="Topham M.K."/>
        </authorList>
    </citation>
    <scope>FUNCTION</scope>
    <scope>CATALYTIC ACTIVITY</scope>
    <scope>BIOPHYSICOCHEMICAL PROPERTIES</scope>
</reference>
<reference key="6">
    <citation type="journal article" date="2010" name="Cell">
        <title>A tissue-specific atlas of mouse protein phosphorylation and expression.</title>
        <authorList>
            <person name="Huttlin E.L."/>
            <person name="Jedrychowski M.P."/>
            <person name="Elias J.E."/>
            <person name="Goswami T."/>
            <person name="Rad R."/>
            <person name="Beausoleil S.A."/>
            <person name="Villen J."/>
            <person name="Haas W."/>
            <person name="Sowa M.E."/>
            <person name="Gygi S.P."/>
        </authorList>
    </citation>
    <scope>IDENTIFICATION BY MASS SPECTROMETRY [LARGE SCALE ANALYSIS]</scope>
    <source>
        <tissue>Brain</tissue>
        <tissue>Brown adipose tissue</tissue>
        <tissue>Heart</tissue>
        <tissue>Kidney</tissue>
        <tissue>Liver</tissue>
        <tissue>Lung</tissue>
        <tissue>Pancreas</tissue>
        <tissue>Spleen</tissue>
        <tissue>Testis</tissue>
    </source>
</reference>
<gene>
    <name evidence="11" type="primary">Agk</name>
    <name evidence="6" type="synonym">Mulk</name>
</gene>
<organism>
    <name type="scientific">Mus musculus</name>
    <name type="common">Mouse</name>
    <dbReference type="NCBI Taxonomy" id="10090"/>
    <lineage>
        <taxon>Eukaryota</taxon>
        <taxon>Metazoa</taxon>
        <taxon>Chordata</taxon>
        <taxon>Craniata</taxon>
        <taxon>Vertebrata</taxon>
        <taxon>Euteleostomi</taxon>
        <taxon>Mammalia</taxon>
        <taxon>Eutheria</taxon>
        <taxon>Euarchontoglires</taxon>
        <taxon>Glires</taxon>
        <taxon>Rodentia</taxon>
        <taxon>Myomorpha</taxon>
        <taxon>Muroidea</taxon>
        <taxon>Muridae</taxon>
        <taxon>Murinae</taxon>
        <taxon>Mus</taxon>
        <taxon>Mus</taxon>
    </lineage>
</organism>
<comment type="function">
    <text evidence="1 4 5">Lipid kinase that can phosphorylate both monoacylglycerol and diacylglycerol to form lysophosphatidic acid (LPA) and phosphatidic acid (PA), respectively (PubMed:15252046). Phosphorylates ceramide but not sphingosine (PubMed:15252046). Phosphorylates 1,2-dioleoylglycerol more rapidly than 2,3-dioleoylglycerol (PubMed:18004883). Independently of its lipid kinase activity, acts as a component of the TIM22 complex (By similarity). The TIM22 complex mediates the import and insertion of multi-pass transmembrane proteins into the mitochondrial inner membrane by forming a twin-pore translocase that uses the membrane potential as the external driving force (By similarity). In the TIM22 complex, required for the import of a subset of metabolite carriers into mitochondria, such as ANT1/SLC25A4 and SLC25A24, while it is not required for the import of TIMM23 (By similarity). Overexpression increases the formation and secretion of LPA, resulting in transactivation of EGFR and activation of the downstream MAPK signaling pathway, leading to increased cell growth (By similarity).</text>
</comment>
<comment type="catalytic activity">
    <reaction evidence="4">
        <text>a monoacylglycerol + ATP = a monoacyl-sn-glycero-3-phosphate + ADP + H(+)</text>
        <dbReference type="Rhea" id="RHEA:19293"/>
        <dbReference type="ChEBI" id="CHEBI:15378"/>
        <dbReference type="ChEBI" id="CHEBI:17408"/>
        <dbReference type="ChEBI" id="CHEBI:30616"/>
        <dbReference type="ChEBI" id="CHEBI:77589"/>
        <dbReference type="ChEBI" id="CHEBI:456216"/>
        <dbReference type="EC" id="2.7.1.94"/>
    </reaction>
    <physiologicalReaction direction="left-to-right" evidence="9">
        <dbReference type="Rhea" id="RHEA:19294"/>
    </physiologicalReaction>
</comment>
<comment type="catalytic activity">
    <reaction evidence="4 5">
        <text>a 1,2-diacyl-sn-glycerol + ATP = a 1,2-diacyl-sn-glycero-3-phosphate + ADP + H(+)</text>
        <dbReference type="Rhea" id="RHEA:10272"/>
        <dbReference type="ChEBI" id="CHEBI:15378"/>
        <dbReference type="ChEBI" id="CHEBI:17815"/>
        <dbReference type="ChEBI" id="CHEBI:30616"/>
        <dbReference type="ChEBI" id="CHEBI:58608"/>
        <dbReference type="ChEBI" id="CHEBI:456216"/>
        <dbReference type="EC" id="2.7.1.107"/>
    </reaction>
    <physiologicalReaction direction="left-to-right" evidence="9 10">
        <dbReference type="Rhea" id="RHEA:10273"/>
    </physiologicalReaction>
</comment>
<comment type="catalytic activity">
    <reaction evidence="4">
        <text>an N-acylsphing-4-enine + ATP = an N-acylsphing-4-enine 1-phosphate + ADP + H(+)</text>
        <dbReference type="Rhea" id="RHEA:17929"/>
        <dbReference type="ChEBI" id="CHEBI:15378"/>
        <dbReference type="ChEBI" id="CHEBI:30616"/>
        <dbReference type="ChEBI" id="CHEBI:52639"/>
        <dbReference type="ChEBI" id="CHEBI:57674"/>
        <dbReference type="ChEBI" id="CHEBI:456216"/>
        <dbReference type="EC" id="2.7.1.138"/>
    </reaction>
    <physiologicalReaction direction="left-to-right" evidence="9">
        <dbReference type="Rhea" id="RHEA:17930"/>
    </physiologicalReaction>
</comment>
<comment type="catalytic activity">
    <reaction evidence="4 5">
        <text>1,2-di-(9Z-octadecenoyl)-sn-glycerol + ATP = 1,2-di-(9Z-octadecenoyl)-sn-glycero-3-phosphate + ADP + H(+)</text>
        <dbReference type="Rhea" id="RHEA:40327"/>
        <dbReference type="ChEBI" id="CHEBI:15378"/>
        <dbReference type="ChEBI" id="CHEBI:30616"/>
        <dbReference type="ChEBI" id="CHEBI:52333"/>
        <dbReference type="ChEBI" id="CHEBI:74546"/>
        <dbReference type="ChEBI" id="CHEBI:456216"/>
    </reaction>
    <physiologicalReaction direction="left-to-right" evidence="9 10">
        <dbReference type="Rhea" id="RHEA:40328"/>
    </physiologicalReaction>
</comment>
<comment type="catalytic activity">
    <reaction evidence="4">
        <text>1-(9Z-octadecenoyl)-sn-glycerol + ATP = 1-(9Z-octadecenoyl)-sn-glycero-3-phosphate + ADP + H(+)</text>
        <dbReference type="Rhea" id="RHEA:41079"/>
        <dbReference type="ChEBI" id="CHEBI:15378"/>
        <dbReference type="ChEBI" id="CHEBI:30616"/>
        <dbReference type="ChEBI" id="CHEBI:74544"/>
        <dbReference type="ChEBI" id="CHEBI:75757"/>
        <dbReference type="ChEBI" id="CHEBI:456216"/>
    </reaction>
    <physiologicalReaction direction="left-to-right" evidence="9">
        <dbReference type="Rhea" id="RHEA:41080"/>
    </physiologicalReaction>
</comment>
<comment type="catalytic activity">
    <reaction evidence="4">
        <text>1-(5Z,8Z,11Z,14Z-eicosatetraenoyl)-sn-glycerol + ATP = 1-(5Z,8Z,11Z,14Z-eicosatetraenoyl)-sn-glycero-3-phosphate + ADP + H(+)</text>
        <dbReference type="Rhea" id="RHEA:43328"/>
        <dbReference type="ChEBI" id="CHEBI:15378"/>
        <dbReference type="ChEBI" id="CHEBI:30616"/>
        <dbReference type="ChEBI" id="CHEBI:34071"/>
        <dbReference type="ChEBI" id="CHEBI:74938"/>
        <dbReference type="ChEBI" id="CHEBI:456216"/>
    </reaction>
    <physiologicalReaction direction="left-to-right" evidence="9">
        <dbReference type="Rhea" id="RHEA:43329"/>
    </physiologicalReaction>
</comment>
<comment type="catalytic activity">
    <reaction evidence="1">
        <text>a 1-acyl-sn-glycerol + ATP = a 1-acyl-sn-glycero-3-phosphate + ADP + H(+)</text>
        <dbReference type="Rhea" id="RHEA:33747"/>
        <dbReference type="ChEBI" id="CHEBI:15378"/>
        <dbReference type="ChEBI" id="CHEBI:30616"/>
        <dbReference type="ChEBI" id="CHEBI:57970"/>
        <dbReference type="ChEBI" id="CHEBI:64683"/>
        <dbReference type="ChEBI" id="CHEBI:456216"/>
    </reaction>
    <physiologicalReaction direction="left-to-right" evidence="1">
        <dbReference type="Rhea" id="RHEA:33748"/>
    </physiologicalReaction>
</comment>
<comment type="catalytic activity">
    <reaction evidence="1">
        <text>1-hexadecanoyl-sn-glycerol + ATP = 1-hexadecanoyl-sn-glycero-3-phosphate + ADP + H(+)</text>
        <dbReference type="Rhea" id="RHEA:43308"/>
        <dbReference type="ChEBI" id="CHEBI:15378"/>
        <dbReference type="ChEBI" id="CHEBI:30616"/>
        <dbReference type="ChEBI" id="CHEBI:57518"/>
        <dbReference type="ChEBI" id="CHEBI:75542"/>
        <dbReference type="ChEBI" id="CHEBI:456216"/>
    </reaction>
    <physiologicalReaction direction="left-to-right" evidence="1">
        <dbReference type="Rhea" id="RHEA:43309"/>
    </physiologicalReaction>
</comment>
<comment type="catalytic activity">
    <reaction evidence="1">
        <text>a 2-acylglycerol + ATP = a 2-acyl-sn-glycerol 3-phosphate + ADP + H(+)</text>
        <dbReference type="Rhea" id="RHEA:39847"/>
        <dbReference type="ChEBI" id="CHEBI:15378"/>
        <dbReference type="ChEBI" id="CHEBI:17389"/>
        <dbReference type="ChEBI" id="CHEBI:30616"/>
        <dbReference type="ChEBI" id="CHEBI:64982"/>
        <dbReference type="ChEBI" id="CHEBI:456216"/>
    </reaction>
    <physiologicalReaction direction="left-to-right" evidence="1">
        <dbReference type="Rhea" id="RHEA:39848"/>
    </physiologicalReaction>
</comment>
<comment type="catalytic activity">
    <reaction evidence="1">
        <text>2-(5Z,8Z,11Z,14Z-eicosatetraenoyl)-glycerol + ATP = 2-(5Z,8Z,11Z,14Z-eicosatetraenoyl)-sn-glycero-3-phosphate + ADP + H(+)</text>
        <dbReference type="Rhea" id="RHEA:43316"/>
        <dbReference type="ChEBI" id="CHEBI:15378"/>
        <dbReference type="ChEBI" id="CHEBI:30616"/>
        <dbReference type="ChEBI" id="CHEBI:52392"/>
        <dbReference type="ChEBI" id="CHEBI:78209"/>
        <dbReference type="ChEBI" id="CHEBI:456216"/>
    </reaction>
    <physiologicalReaction direction="left-to-right" evidence="1">
        <dbReference type="Rhea" id="RHEA:43317"/>
    </physiologicalReaction>
</comment>
<comment type="catalytic activity">
    <reaction evidence="1">
        <text>N-(hexanoyl)sphing-4-enine + ATP = N-hexanoylsphing-4-enine 1-phosphate + ADP + H(+)</text>
        <dbReference type="Rhea" id="RHEA:43312"/>
        <dbReference type="ChEBI" id="CHEBI:15378"/>
        <dbReference type="ChEBI" id="CHEBI:30616"/>
        <dbReference type="ChEBI" id="CHEBI:63867"/>
        <dbReference type="ChEBI" id="CHEBI:82959"/>
        <dbReference type="ChEBI" id="CHEBI:456216"/>
    </reaction>
    <physiologicalReaction direction="left-to-right" evidence="1">
        <dbReference type="Rhea" id="RHEA:43313"/>
    </physiologicalReaction>
</comment>
<comment type="cofactor">
    <cofactor evidence="4">
        <name>Mg(2+)</name>
        <dbReference type="ChEBI" id="CHEBI:18420"/>
    </cofactor>
</comment>
<comment type="activity regulation">
    <text evidence="4">Both the ceramide and diacylglycerol kinase activities are inhibited by sphingosine and stimulated by cardiolipin (PubMed:15252046). Both activities are stimulated by calcium when magnesium concentrations are low but inhibited by calcium when magnesium concentrations are high (PubMed:15252046).</text>
</comment>
<comment type="biophysicochemical properties">
    <kinetics>
        <KM evidence="4">45 uM for diacylglycerol</KM>
        <KM evidence="4">34 uM for ceramide</KM>
        <Vmax evidence="4">159.0 nmol/min/mg enzyme with dioeoylglycerol as substrate</Vmax>
        <Vmax evidence="4">37.0 nmol/min/mg enzyme with ceramide as substrate</Vmax>
        <Vmax evidence="5">23.6 nmol/min/mg enzyme with 1,2-dioleoylglycerol as substrate</Vmax>
        <Vmax evidence="5">10.21 nmol/min/mg enzyme with 2,3-dioleoylglycerol as substrate</Vmax>
    </kinetics>
</comment>
<comment type="pathway">
    <text evidence="4">Lipid metabolism; glycerolipid metabolism.</text>
</comment>
<comment type="subunit">
    <text evidence="1">Component of the TIM22 complex, which core is composed of TIMM22, associated with TIMM10 (TIMM10A and/or TIMM10B), TIMM9, AGK and TIMM29. Interacts with SMIM26.</text>
</comment>
<comment type="subcellular location">
    <subcellularLocation>
        <location evidence="1">Mitochondrion inner membrane</location>
        <topology evidence="1">Peripheral membrane protein</topology>
    </subcellularLocation>
    <subcellularLocation>
        <location evidence="1">Mitochondrion intermembrane space</location>
    </subcellularLocation>
    <text evidence="1">Localizes in the mitochondrion intermembrane space, where it associates with the inner membrane. It is unclear whether the N-terminal hydrophobic region forms a transmembrane region or associates with the membrane without crossing it.</text>
</comment>
<comment type="alternative products">
    <event type="alternative splicing"/>
    <isoform>
        <id>Q9ESW4-1</id>
        <name>1</name>
        <sequence type="displayed"/>
    </isoform>
    <isoform>
        <id>Q9ESW4-2</id>
        <name>2</name>
        <sequence type="described" ref="VSP_020927"/>
    </isoform>
</comment>
<comment type="tissue specificity">
    <text evidence="4">Ubiquitously expressed.</text>
</comment>
<comment type="similarity">
    <text evidence="8">Belongs to the AGK family.</text>
</comment>
<comment type="caution">
    <text evidence="9">Was originally (PubMed:15252046) thought to have ceramide kinase activity. Such activity is however unlikely in vivo.</text>
</comment>
<accession>Q9ESW4</accession>
<accession>Q9D087</accession>
<evidence type="ECO:0000250" key="1">
    <source>
        <dbReference type="UniProtKB" id="Q53H12"/>
    </source>
</evidence>
<evidence type="ECO:0000255" key="2">
    <source>
        <dbReference type="PROSITE-ProRule" id="PRU00783"/>
    </source>
</evidence>
<evidence type="ECO:0000256" key="3">
    <source>
        <dbReference type="SAM" id="MobiDB-lite"/>
    </source>
</evidence>
<evidence type="ECO:0000269" key="4">
    <source>
    </source>
</evidence>
<evidence type="ECO:0000269" key="5">
    <source>
    </source>
</evidence>
<evidence type="ECO:0000303" key="6">
    <source>
    </source>
</evidence>
<evidence type="ECO:0000303" key="7">
    <source>
    </source>
</evidence>
<evidence type="ECO:0000305" key="8"/>
<evidence type="ECO:0000305" key="9">
    <source>
    </source>
</evidence>
<evidence type="ECO:0000305" key="10">
    <source>
    </source>
</evidence>
<evidence type="ECO:0000312" key="11">
    <source>
        <dbReference type="MGI" id="MGI:1917173"/>
    </source>
</evidence>
<proteinExistence type="evidence at protein level"/>
<dbReference type="EC" id="2.7.1.107" evidence="4"/>
<dbReference type="EC" id="2.7.1.138" evidence="4"/>
<dbReference type="EC" id="2.7.1.94" evidence="4 5"/>
<dbReference type="EMBL" id="AY772469">
    <property type="protein sequence ID" value="AAV38106.1"/>
    <property type="molecule type" value="mRNA"/>
</dbReference>
<dbReference type="EMBL" id="AJ401619">
    <property type="protein sequence ID" value="CAC06108.1"/>
    <property type="molecule type" value="mRNA"/>
</dbReference>
<dbReference type="EMBL" id="AK011715">
    <property type="protein sequence ID" value="BAB27796.1"/>
    <property type="molecule type" value="mRNA"/>
</dbReference>
<dbReference type="EMBL" id="AK076224">
    <property type="protein sequence ID" value="BAC36260.1"/>
    <property type="molecule type" value="mRNA"/>
</dbReference>
<dbReference type="EMBL" id="BC019145">
    <property type="protein sequence ID" value="AAH19145.1"/>
    <property type="molecule type" value="mRNA"/>
</dbReference>
<dbReference type="EMBL" id="BC093525">
    <property type="protein sequence ID" value="AAH93525.1"/>
    <property type="molecule type" value="mRNA"/>
</dbReference>
<dbReference type="CCDS" id="CCDS20027.1">
    <molecule id="Q9ESW4-1"/>
</dbReference>
<dbReference type="RefSeq" id="NP_076027.1">
    <molecule id="Q9ESW4-1"/>
    <property type="nucleotide sequence ID" value="NM_023538.2"/>
</dbReference>
<dbReference type="SMR" id="Q9ESW4"/>
<dbReference type="BioGRID" id="213759">
    <property type="interactions" value="6"/>
</dbReference>
<dbReference type="FunCoup" id="Q9ESW4">
    <property type="interactions" value="2786"/>
</dbReference>
<dbReference type="STRING" id="10090.ENSMUSP00000031977"/>
<dbReference type="SwissLipids" id="SLP:000000885"/>
<dbReference type="GlyGen" id="Q9ESW4">
    <property type="glycosylation" value="1 site, 1 O-linked glycan (1 site)"/>
</dbReference>
<dbReference type="iPTMnet" id="Q9ESW4"/>
<dbReference type="PhosphoSitePlus" id="Q9ESW4"/>
<dbReference type="SwissPalm" id="Q9ESW4"/>
<dbReference type="jPOST" id="Q9ESW4"/>
<dbReference type="PaxDb" id="10090-ENSMUSP00000031977"/>
<dbReference type="PeptideAtlas" id="Q9ESW4"/>
<dbReference type="ProteomicsDB" id="296083">
    <molecule id="Q9ESW4-1"/>
</dbReference>
<dbReference type="ProteomicsDB" id="296084">
    <molecule id="Q9ESW4-2"/>
</dbReference>
<dbReference type="Pumba" id="Q9ESW4"/>
<dbReference type="Antibodypedia" id="18305">
    <property type="antibodies" value="195 antibodies from 31 providers"/>
</dbReference>
<dbReference type="DNASU" id="69923"/>
<dbReference type="Ensembl" id="ENSMUST00000031977.12">
    <molecule id="Q9ESW4-1"/>
    <property type="protein sequence ID" value="ENSMUSP00000031977.9"/>
    <property type="gene ID" value="ENSMUSG00000029916.12"/>
</dbReference>
<dbReference type="GeneID" id="69923"/>
<dbReference type="KEGG" id="mmu:69923"/>
<dbReference type="UCSC" id="uc009bmm.2">
    <molecule id="Q9ESW4-2"/>
    <property type="organism name" value="mouse"/>
</dbReference>
<dbReference type="UCSC" id="uc009bmn.2">
    <molecule id="Q9ESW4-1"/>
    <property type="organism name" value="mouse"/>
</dbReference>
<dbReference type="AGR" id="MGI:1917173"/>
<dbReference type="CTD" id="55750"/>
<dbReference type="MGI" id="MGI:1917173">
    <property type="gene designation" value="Agk"/>
</dbReference>
<dbReference type="VEuPathDB" id="HostDB:ENSMUSG00000029916"/>
<dbReference type="eggNOG" id="KOG4435">
    <property type="taxonomic scope" value="Eukaryota"/>
</dbReference>
<dbReference type="GeneTree" id="ENSGT00940000154961"/>
<dbReference type="HOGENOM" id="CLU_042458_0_0_1"/>
<dbReference type="InParanoid" id="Q9ESW4"/>
<dbReference type="OMA" id="HWKKTTF"/>
<dbReference type="OrthoDB" id="9979394at2759"/>
<dbReference type="PhylomeDB" id="Q9ESW4"/>
<dbReference type="TreeFam" id="TF320485"/>
<dbReference type="BRENDA" id="2.7.1.94">
    <property type="organism ID" value="3474"/>
</dbReference>
<dbReference type="Reactome" id="R-MMU-1483206">
    <property type="pathway name" value="Glycerophospholipid biosynthesis"/>
</dbReference>
<dbReference type="SABIO-RK" id="Q9ESW4"/>
<dbReference type="UniPathway" id="UPA00230"/>
<dbReference type="BioGRID-ORCS" id="69923">
    <property type="hits" value="6 hits in 77 CRISPR screens"/>
</dbReference>
<dbReference type="CD-CODE" id="CE726F99">
    <property type="entry name" value="Postsynaptic density"/>
</dbReference>
<dbReference type="ChiTaRS" id="Agk">
    <property type="organism name" value="mouse"/>
</dbReference>
<dbReference type="PRO" id="PR:Q9ESW4"/>
<dbReference type="Proteomes" id="UP000000589">
    <property type="component" value="Chromosome 6"/>
</dbReference>
<dbReference type="RNAct" id="Q9ESW4">
    <property type="molecule type" value="protein"/>
</dbReference>
<dbReference type="Bgee" id="ENSMUSG00000029916">
    <property type="expression patterns" value="Expressed in animal zygote and 96 other cell types or tissues"/>
</dbReference>
<dbReference type="ExpressionAtlas" id="Q9ESW4">
    <property type="expression patterns" value="baseline and differential"/>
</dbReference>
<dbReference type="GO" id="GO:0016020">
    <property type="term" value="C:membrane"/>
    <property type="evidence" value="ECO:0000314"/>
    <property type="project" value="MGI"/>
</dbReference>
<dbReference type="GO" id="GO:0005743">
    <property type="term" value="C:mitochondrial inner membrane"/>
    <property type="evidence" value="ECO:0000250"/>
    <property type="project" value="UniProtKB"/>
</dbReference>
<dbReference type="GO" id="GO:0005758">
    <property type="term" value="C:mitochondrial intermembrane space"/>
    <property type="evidence" value="ECO:0000250"/>
    <property type="project" value="UniProtKB"/>
</dbReference>
<dbReference type="GO" id="GO:0031966">
    <property type="term" value="C:mitochondrial membrane"/>
    <property type="evidence" value="ECO:0000250"/>
    <property type="project" value="UniProtKB"/>
</dbReference>
<dbReference type="GO" id="GO:0005739">
    <property type="term" value="C:mitochondrion"/>
    <property type="evidence" value="ECO:0007005"/>
    <property type="project" value="MGI"/>
</dbReference>
<dbReference type="GO" id="GO:0042721">
    <property type="term" value="C:TIM22 mitochondrial import inner membrane insertion complex"/>
    <property type="evidence" value="ECO:0000250"/>
    <property type="project" value="UniProtKB"/>
</dbReference>
<dbReference type="GO" id="GO:0047620">
    <property type="term" value="F:acylglycerol kinase activity"/>
    <property type="evidence" value="ECO:0000314"/>
    <property type="project" value="UniProtKB"/>
</dbReference>
<dbReference type="GO" id="GO:0005524">
    <property type="term" value="F:ATP binding"/>
    <property type="evidence" value="ECO:0007669"/>
    <property type="project" value="UniProtKB-KW"/>
</dbReference>
<dbReference type="GO" id="GO:0004143">
    <property type="term" value="F:ATP-dependent diacylglycerol kinase activity"/>
    <property type="evidence" value="ECO:0000314"/>
    <property type="project" value="UniProtKB"/>
</dbReference>
<dbReference type="GO" id="GO:0001729">
    <property type="term" value="F:ceramide kinase activity"/>
    <property type="evidence" value="ECO:0000314"/>
    <property type="project" value="MGI"/>
</dbReference>
<dbReference type="GO" id="GO:0001727">
    <property type="term" value="F:lipid kinase activity"/>
    <property type="evidence" value="ECO:0000314"/>
    <property type="project" value="MGI"/>
</dbReference>
<dbReference type="GO" id="GO:0046513">
    <property type="term" value="P:ceramide biosynthetic process"/>
    <property type="evidence" value="ECO:0000314"/>
    <property type="project" value="MGI"/>
</dbReference>
<dbReference type="GO" id="GO:0046486">
    <property type="term" value="P:glycerolipid metabolic process"/>
    <property type="evidence" value="ECO:0007669"/>
    <property type="project" value="UniProtKB-UniPathway"/>
</dbReference>
<dbReference type="GO" id="GO:0046834">
    <property type="term" value="P:lipid phosphorylation"/>
    <property type="evidence" value="ECO:0000314"/>
    <property type="project" value="MGI"/>
</dbReference>
<dbReference type="GO" id="GO:0045039">
    <property type="term" value="P:protein insertion into mitochondrial inner membrane"/>
    <property type="evidence" value="ECO:0000250"/>
    <property type="project" value="UniProtKB"/>
</dbReference>
<dbReference type="FunFam" id="3.40.50.10330:FF:000015">
    <property type="entry name" value="acylglycerol kinase, mitochondrial"/>
    <property type="match status" value="1"/>
</dbReference>
<dbReference type="Gene3D" id="3.40.50.10330">
    <property type="entry name" value="Probable inorganic polyphosphate/atp-NAD kinase, domain 1"/>
    <property type="match status" value="1"/>
</dbReference>
<dbReference type="InterPro" id="IPR045579">
    <property type="entry name" value="AGK_C"/>
</dbReference>
<dbReference type="InterPro" id="IPR017438">
    <property type="entry name" value="ATP-NAD_kinase_N"/>
</dbReference>
<dbReference type="InterPro" id="IPR001206">
    <property type="entry name" value="Diacylglycerol_kinase_cat_dom"/>
</dbReference>
<dbReference type="InterPro" id="IPR050187">
    <property type="entry name" value="Lipid_Phosphate_FormReg"/>
</dbReference>
<dbReference type="InterPro" id="IPR016064">
    <property type="entry name" value="NAD/diacylglycerol_kinase_sf"/>
</dbReference>
<dbReference type="PANTHER" id="PTHR12358:SF31">
    <property type="entry name" value="ACYLGLYCEROL KINASE, MITOCHONDRIAL"/>
    <property type="match status" value="1"/>
</dbReference>
<dbReference type="PANTHER" id="PTHR12358">
    <property type="entry name" value="SPHINGOSINE KINASE"/>
    <property type="match status" value="1"/>
</dbReference>
<dbReference type="Pfam" id="PF19712">
    <property type="entry name" value="AGK_C"/>
    <property type="match status" value="1"/>
</dbReference>
<dbReference type="Pfam" id="PF00781">
    <property type="entry name" value="DAGK_cat"/>
    <property type="match status" value="1"/>
</dbReference>
<dbReference type="SMART" id="SM00046">
    <property type="entry name" value="DAGKc"/>
    <property type="match status" value="1"/>
</dbReference>
<dbReference type="SUPFAM" id="SSF111331">
    <property type="entry name" value="NAD kinase/diacylglycerol kinase-like"/>
    <property type="match status" value="1"/>
</dbReference>
<dbReference type="PROSITE" id="PS50146">
    <property type="entry name" value="DAGK"/>
    <property type="match status" value="1"/>
</dbReference>
<protein>
    <recommendedName>
        <fullName evidence="1">Acylglycerol kinase, mitochondrial</fullName>
        <ecNumber evidence="4">2.7.1.107</ecNumber>
        <ecNumber evidence="4">2.7.1.138</ecNumber>
        <ecNumber evidence="4 5">2.7.1.94</ecNumber>
    </recommendedName>
    <alternativeName>
        <fullName evidence="6">Multiple substrate lipid kinase</fullName>
        <shortName evidence="6">MuLK</shortName>
        <shortName evidence="6">Multi-substrate lipid kinase</shortName>
    </alternativeName>
</protein>
<name>AGK_MOUSE</name>